<sequence>MSESNVTEETKAARGFRKTRQGLVVSDKMDKTVVVAVEDRVTHALYGKVIRRTEKLKAHDEQNAAGVGDRVLLMETRPLSATKRWRVVEVLEKAK</sequence>
<comment type="function">
    <text evidence="1">One of the primary rRNA binding proteins, it binds specifically to the 5'-end of 16S ribosomal RNA.</text>
</comment>
<comment type="subunit">
    <text evidence="1">Part of the 30S ribosomal subunit.</text>
</comment>
<comment type="similarity">
    <text evidence="1">Belongs to the universal ribosomal protein uS17 family.</text>
</comment>
<feature type="chain" id="PRO_0000233584" description="Small ribosomal subunit protein uS17">
    <location>
        <begin position="1"/>
        <end position="95"/>
    </location>
</feature>
<gene>
    <name evidence="1" type="primary">rpsQ</name>
    <name type="ordered locus">SCO4711</name>
    <name type="ORF">SCD31.36</name>
</gene>
<accession>Q9L0D1</accession>
<proteinExistence type="inferred from homology"/>
<organism>
    <name type="scientific">Streptomyces coelicolor (strain ATCC BAA-471 / A3(2) / M145)</name>
    <dbReference type="NCBI Taxonomy" id="100226"/>
    <lineage>
        <taxon>Bacteria</taxon>
        <taxon>Bacillati</taxon>
        <taxon>Actinomycetota</taxon>
        <taxon>Actinomycetes</taxon>
        <taxon>Kitasatosporales</taxon>
        <taxon>Streptomycetaceae</taxon>
        <taxon>Streptomyces</taxon>
        <taxon>Streptomyces albidoflavus group</taxon>
    </lineage>
</organism>
<keyword id="KW-1185">Reference proteome</keyword>
<keyword id="KW-0687">Ribonucleoprotein</keyword>
<keyword id="KW-0689">Ribosomal protein</keyword>
<keyword id="KW-0694">RNA-binding</keyword>
<keyword id="KW-0699">rRNA-binding</keyword>
<name>RS17_STRCO</name>
<protein>
    <recommendedName>
        <fullName evidence="1">Small ribosomal subunit protein uS17</fullName>
    </recommendedName>
    <alternativeName>
        <fullName evidence="2">30S ribosomal protein S17</fullName>
    </alternativeName>
</protein>
<reference key="1">
    <citation type="journal article" date="2002" name="Nature">
        <title>Complete genome sequence of the model actinomycete Streptomyces coelicolor A3(2).</title>
        <authorList>
            <person name="Bentley S.D."/>
            <person name="Chater K.F."/>
            <person name="Cerdeno-Tarraga A.-M."/>
            <person name="Challis G.L."/>
            <person name="Thomson N.R."/>
            <person name="James K.D."/>
            <person name="Harris D.E."/>
            <person name="Quail M.A."/>
            <person name="Kieser H."/>
            <person name="Harper D."/>
            <person name="Bateman A."/>
            <person name="Brown S."/>
            <person name="Chandra G."/>
            <person name="Chen C.W."/>
            <person name="Collins M."/>
            <person name="Cronin A."/>
            <person name="Fraser A."/>
            <person name="Goble A."/>
            <person name="Hidalgo J."/>
            <person name="Hornsby T."/>
            <person name="Howarth S."/>
            <person name="Huang C.-H."/>
            <person name="Kieser T."/>
            <person name="Larke L."/>
            <person name="Murphy L.D."/>
            <person name="Oliver K."/>
            <person name="O'Neil S."/>
            <person name="Rabbinowitsch E."/>
            <person name="Rajandream M.A."/>
            <person name="Rutherford K.M."/>
            <person name="Rutter S."/>
            <person name="Seeger K."/>
            <person name="Saunders D."/>
            <person name="Sharp S."/>
            <person name="Squares R."/>
            <person name="Squares S."/>
            <person name="Taylor K."/>
            <person name="Warren T."/>
            <person name="Wietzorrek A."/>
            <person name="Woodward J.R."/>
            <person name="Barrell B.G."/>
            <person name="Parkhill J."/>
            <person name="Hopwood D.A."/>
        </authorList>
    </citation>
    <scope>NUCLEOTIDE SEQUENCE [LARGE SCALE GENOMIC DNA]</scope>
    <source>
        <strain>ATCC BAA-471 / A3(2) / M145</strain>
    </source>
</reference>
<dbReference type="EMBL" id="AL939121">
    <property type="protein sequence ID" value="CAB82079.1"/>
    <property type="molecule type" value="Genomic_DNA"/>
</dbReference>
<dbReference type="RefSeq" id="NP_628870.1">
    <property type="nucleotide sequence ID" value="NC_003888.3"/>
</dbReference>
<dbReference type="RefSeq" id="WP_003974258.1">
    <property type="nucleotide sequence ID" value="NZ_VNID01000016.1"/>
</dbReference>
<dbReference type="SMR" id="Q9L0D1"/>
<dbReference type="FunCoup" id="Q9L0D1">
    <property type="interactions" value="95"/>
</dbReference>
<dbReference type="STRING" id="100226.gene:17762360"/>
<dbReference type="PaxDb" id="100226-SCO4711"/>
<dbReference type="GeneID" id="97462949"/>
<dbReference type="KEGG" id="sco:SCO4711"/>
<dbReference type="PATRIC" id="fig|100226.15.peg.4782"/>
<dbReference type="eggNOG" id="COG0186">
    <property type="taxonomic scope" value="Bacteria"/>
</dbReference>
<dbReference type="HOGENOM" id="CLU_073626_1_0_11"/>
<dbReference type="InParanoid" id="Q9L0D1"/>
<dbReference type="OrthoDB" id="9811714at2"/>
<dbReference type="PhylomeDB" id="Q9L0D1"/>
<dbReference type="Proteomes" id="UP000001973">
    <property type="component" value="Chromosome"/>
</dbReference>
<dbReference type="GO" id="GO:0022627">
    <property type="term" value="C:cytosolic small ribosomal subunit"/>
    <property type="evidence" value="ECO:0000318"/>
    <property type="project" value="GO_Central"/>
</dbReference>
<dbReference type="GO" id="GO:0019843">
    <property type="term" value="F:rRNA binding"/>
    <property type="evidence" value="ECO:0007669"/>
    <property type="project" value="UniProtKB-UniRule"/>
</dbReference>
<dbReference type="GO" id="GO:0003735">
    <property type="term" value="F:structural constituent of ribosome"/>
    <property type="evidence" value="ECO:0000318"/>
    <property type="project" value="GO_Central"/>
</dbReference>
<dbReference type="GO" id="GO:0006412">
    <property type="term" value="P:translation"/>
    <property type="evidence" value="ECO:0007669"/>
    <property type="project" value="UniProtKB-UniRule"/>
</dbReference>
<dbReference type="CDD" id="cd00364">
    <property type="entry name" value="Ribosomal_uS17"/>
    <property type="match status" value="1"/>
</dbReference>
<dbReference type="FunFam" id="2.40.50.140:FF:000026">
    <property type="entry name" value="30S ribosomal protein S17"/>
    <property type="match status" value="1"/>
</dbReference>
<dbReference type="Gene3D" id="2.40.50.140">
    <property type="entry name" value="Nucleic acid-binding proteins"/>
    <property type="match status" value="1"/>
</dbReference>
<dbReference type="HAMAP" id="MF_01345_B">
    <property type="entry name" value="Ribosomal_uS17_B"/>
    <property type="match status" value="1"/>
</dbReference>
<dbReference type="InterPro" id="IPR012340">
    <property type="entry name" value="NA-bd_OB-fold"/>
</dbReference>
<dbReference type="InterPro" id="IPR000266">
    <property type="entry name" value="Ribosomal_uS17"/>
</dbReference>
<dbReference type="InterPro" id="IPR019984">
    <property type="entry name" value="Ribosomal_uS17_bact/chlr"/>
</dbReference>
<dbReference type="InterPro" id="IPR019979">
    <property type="entry name" value="Ribosomal_uS17_CS"/>
</dbReference>
<dbReference type="NCBIfam" id="NF004123">
    <property type="entry name" value="PRK05610.1"/>
    <property type="match status" value="1"/>
</dbReference>
<dbReference type="NCBIfam" id="TIGR03635">
    <property type="entry name" value="uS17_bact"/>
    <property type="match status" value="1"/>
</dbReference>
<dbReference type="PANTHER" id="PTHR10744">
    <property type="entry name" value="40S RIBOSOMAL PROTEIN S11 FAMILY MEMBER"/>
    <property type="match status" value="1"/>
</dbReference>
<dbReference type="PANTHER" id="PTHR10744:SF1">
    <property type="entry name" value="SMALL RIBOSOMAL SUBUNIT PROTEIN US17M"/>
    <property type="match status" value="1"/>
</dbReference>
<dbReference type="Pfam" id="PF00366">
    <property type="entry name" value="Ribosomal_S17"/>
    <property type="match status" value="1"/>
</dbReference>
<dbReference type="PRINTS" id="PR00973">
    <property type="entry name" value="RIBOSOMALS17"/>
</dbReference>
<dbReference type="SUPFAM" id="SSF50249">
    <property type="entry name" value="Nucleic acid-binding proteins"/>
    <property type="match status" value="1"/>
</dbReference>
<dbReference type="PROSITE" id="PS00056">
    <property type="entry name" value="RIBOSOMAL_S17"/>
    <property type="match status" value="1"/>
</dbReference>
<evidence type="ECO:0000255" key="1">
    <source>
        <dbReference type="HAMAP-Rule" id="MF_01345"/>
    </source>
</evidence>
<evidence type="ECO:0000305" key="2"/>